<feature type="chain" id="PRO_1000125814" description="Putative nickel-responsive regulator">
    <location>
        <begin position="1"/>
        <end position="135"/>
    </location>
</feature>
<feature type="binding site" evidence="1">
    <location>
        <position position="79"/>
    </location>
    <ligand>
        <name>Ni(2+)</name>
        <dbReference type="ChEBI" id="CHEBI:49786"/>
    </ligand>
</feature>
<feature type="binding site" evidence="1">
    <location>
        <position position="90"/>
    </location>
    <ligand>
        <name>Ni(2+)</name>
        <dbReference type="ChEBI" id="CHEBI:49786"/>
    </ligand>
</feature>
<feature type="binding site" evidence="1">
    <location>
        <position position="92"/>
    </location>
    <ligand>
        <name>Ni(2+)</name>
        <dbReference type="ChEBI" id="CHEBI:49786"/>
    </ligand>
</feature>
<feature type="binding site" evidence="1">
    <location>
        <position position="98"/>
    </location>
    <ligand>
        <name>Ni(2+)</name>
        <dbReference type="ChEBI" id="CHEBI:49786"/>
    </ligand>
</feature>
<proteinExistence type="inferred from homology"/>
<sequence length="135" mass="15869">MTKIVRFGVSVEEDLLENFDKIIENKGYNSRSEAIRDLMRDYIIKEKWNIKSEKVAGSISLIYEHDVYGLSEKLTDIQHHYHDVIISTLHVHLDEKNCMEVILVRGKVEKIKKLYNEISSLKWVRHTNISITDII</sequence>
<gene>
    <name type="ordered locus">DICTH_1658</name>
</gene>
<dbReference type="EMBL" id="CP001146">
    <property type="protein sequence ID" value="ACI19256.1"/>
    <property type="molecule type" value="Genomic_DNA"/>
</dbReference>
<dbReference type="RefSeq" id="WP_012547888.1">
    <property type="nucleotide sequence ID" value="NC_011297.1"/>
</dbReference>
<dbReference type="SMR" id="B5YAK0"/>
<dbReference type="STRING" id="309799.DICTH_1658"/>
<dbReference type="PaxDb" id="309799-DICTH_1658"/>
<dbReference type="KEGG" id="dth:DICTH_1658"/>
<dbReference type="eggNOG" id="COG0864">
    <property type="taxonomic scope" value="Bacteria"/>
</dbReference>
<dbReference type="HOGENOM" id="CLU_113319_1_2_0"/>
<dbReference type="OrthoDB" id="9806294at2"/>
<dbReference type="Proteomes" id="UP000001733">
    <property type="component" value="Chromosome"/>
</dbReference>
<dbReference type="GO" id="GO:0003677">
    <property type="term" value="F:DNA binding"/>
    <property type="evidence" value="ECO:0007669"/>
    <property type="project" value="UniProtKB-KW"/>
</dbReference>
<dbReference type="GO" id="GO:0003700">
    <property type="term" value="F:DNA-binding transcription factor activity"/>
    <property type="evidence" value="ECO:0007669"/>
    <property type="project" value="UniProtKB-UniRule"/>
</dbReference>
<dbReference type="GO" id="GO:0016151">
    <property type="term" value="F:nickel cation binding"/>
    <property type="evidence" value="ECO:0007669"/>
    <property type="project" value="UniProtKB-UniRule"/>
</dbReference>
<dbReference type="GO" id="GO:0010045">
    <property type="term" value="P:response to nickel cation"/>
    <property type="evidence" value="ECO:0007669"/>
    <property type="project" value="InterPro"/>
</dbReference>
<dbReference type="CDD" id="cd22231">
    <property type="entry name" value="RHH_NikR_HicB-like"/>
    <property type="match status" value="1"/>
</dbReference>
<dbReference type="Gene3D" id="3.30.70.1150">
    <property type="entry name" value="ACT-like. Chain A, domain 2"/>
    <property type="match status" value="1"/>
</dbReference>
<dbReference type="Gene3D" id="1.10.1220.10">
    <property type="entry name" value="Met repressor-like"/>
    <property type="match status" value="1"/>
</dbReference>
<dbReference type="HAMAP" id="MF_00476">
    <property type="entry name" value="NikR"/>
    <property type="match status" value="1"/>
</dbReference>
<dbReference type="InterPro" id="IPR027271">
    <property type="entry name" value="Acetolactate_synth/TF_NikR_C"/>
</dbReference>
<dbReference type="InterPro" id="IPR045865">
    <property type="entry name" value="ACT-like_dom_sf"/>
</dbReference>
<dbReference type="InterPro" id="IPR013321">
    <property type="entry name" value="Arc_rbn_hlx_hlx"/>
</dbReference>
<dbReference type="InterPro" id="IPR002145">
    <property type="entry name" value="CopG"/>
</dbReference>
<dbReference type="InterPro" id="IPR050192">
    <property type="entry name" value="CopG/NikR_regulator"/>
</dbReference>
<dbReference type="InterPro" id="IPR022988">
    <property type="entry name" value="Ni_resp_reg_NikR"/>
</dbReference>
<dbReference type="InterPro" id="IPR010985">
    <property type="entry name" value="Ribbon_hlx_hlx"/>
</dbReference>
<dbReference type="InterPro" id="IPR014864">
    <property type="entry name" value="TF_NikR_Ni-bd_C"/>
</dbReference>
<dbReference type="NCBIfam" id="NF001884">
    <property type="entry name" value="PRK00630.1"/>
    <property type="match status" value="1"/>
</dbReference>
<dbReference type="NCBIfam" id="NF002169">
    <property type="entry name" value="PRK01002.1"/>
    <property type="match status" value="1"/>
</dbReference>
<dbReference type="NCBIfam" id="NF002815">
    <property type="entry name" value="PRK02967.1"/>
    <property type="match status" value="1"/>
</dbReference>
<dbReference type="NCBIfam" id="NF003381">
    <property type="entry name" value="PRK04460.1"/>
    <property type="match status" value="1"/>
</dbReference>
<dbReference type="PANTHER" id="PTHR34719">
    <property type="entry name" value="NICKEL-RESPONSIVE REGULATOR"/>
    <property type="match status" value="1"/>
</dbReference>
<dbReference type="PANTHER" id="PTHR34719:SF2">
    <property type="entry name" value="NICKEL-RESPONSIVE REGULATOR"/>
    <property type="match status" value="1"/>
</dbReference>
<dbReference type="Pfam" id="PF08753">
    <property type="entry name" value="NikR_C"/>
    <property type="match status" value="1"/>
</dbReference>
<dbReference type="Pfam" id="PF01402">
    <property type="entry name" value="RHH_1"/>
    <property type="match status" value="1"/>
</dbReference>
<dbReference type="SUPFAM" id="SSF55021">
    <property type="entry name" value="ACT-like"/>
    <property type="match status" value="1"/>
</dbReference>
<dbReference type="SUPFAM" id="SSF47598">
    <property type="entry name" value="Ribbon-helix-helix"/>
    <property type="match status" value="1"/>
</dbReference>
<accession>B5YAK0</accession>
<keyword id="KW-0238">DNA-binding</keyword>
<keyword id="KW-0479">Metal-binding</keyword>
<keyword id="KW-0533">Nickel</keyword>
<keyword id="KW-0804">Transcription</keyword>
<keyword id="KW-0805">Transcription regulation</keyword>
<protein>
    <recommendedName>
        <fullName evidence="1">Putative nickel-responsive regulator</fullName>
    </recommendedName>
</protein>
<name>NIKR_DICT6</name>
<reference key="1">
    <citation type="journal article" date="2014" name="Genome Announc.">
        <title>Complete Genome Sequence of the Extreme Thermophile Dictyoglomus thermophilum H-6-12.</title>
        <authorList>
            <person name="Coil D.A."/>
            <person name="Badger J.H."/>
            <person name="Forberger H.C."/>
            <person name="Riggs F."/>
            <person name="Madupu R."/>
            <person name="Fedorova N."/>
            <person name="Ward N."/>
            <person name="Robb F.T."/>
            <person name="Eisen J.A."/>
        </authorList>
    </citation>
    <scope>NUCLEOTIDE SEQUENCE [LARGE SCALE GENOMIC DNA]</scope>
    <source>
        <strain>ATCC 35947 / DSM 3960 / H-6-12</strain>
    </source>
</reference>
<comment type="function">
    <text evidence="1">Transcriptional regulator.</text>
</comment>
<comment type="cofactor">
    <cofactor evidence="1">
        <name>Ni(2+)</name>
        <dbReference type="ChEBI" id="CHEBI:49786"/>
    </cofactor>
    <text evidence="1">Binds 1 nickel ion per subunit.</text>
</comment>
<comment type="similarity">
    <text evidence="1">Belongs to the transcriptional regulatory CopG/NikR family.</text>
</comment>
<organism>
    <name type="scientific">Dictyoglomus thermophilum (strain ATCC 35947 / DSM 3960 / H-6-12)</name>
    <dbReference type="NCBI Taxonomy" id="309799"/>
    <lineage>
        <taxon>Bacteria</taxon>
        <taxon>Pseudomonadati</taxon>
        <taxon>Dictyoglomota</taxon>
        <taxon>Dictyoglomia</taxon>
        <taxon>Dictyoglomales</taxon>
        <taxon>Dictyoglomaceae</taxon>
        <taxon>Dictyoglomus</taxon>
    </lineage>
</organism>
<evidence type="ECO:0000255" key="1">
    <source>
        <dbReference type="HAMAP-Rule" id="MF_00476"/>
    </source>
</evidence>